<evidence type="ECO:0000255" key="1">
    <source>
        <dbReference type="PROSITE-ProRule" id="PRU00027"/>
    </source>
</evidence>
<evidence type="ECO:0000256" key="2">
    <source>
        <dbReference type="SAM" id="MobiDB-lite"/>
    </source>
</evidence>
<evidence type="ECO:0000269" key="3">
    <source>
    </source>
</evidence>
<evidence type="ECO:0000303" key="4">
    <source>
    </source>
</evidence>
<evidence type="ECO:0000305" key="5">
    <source>
    </source>
</evidence>
<comment type="function">
    <text evidence="3">Putative transcriptional regulator; part of the gene cluster that mediates the biosynthesis of polyesters containing 2,4-dihydroxy-6-(2-hydroxypropyl)benzoate and 3-hydroxybutyrate moieties, such as talapolyester G, 15G256beta and 15G256beta-2; as well as to oxidized derivatives such as 15G256alpha.</text>
</comment>
<comment type="subcellular location">
    <subcellularLocation>
        <location evidence="5">Nucleus</location>
    </subcellularLocation>
</comment>
<feature type="chain" id="PRO_0000457631" description="Putative transcriptional regulator tpeD">
    <location>
        <begin position="1"/>
        <end position="846"/>
    </location>
</feature>
<feature type="zinc finger region" description="BED-type; degenerate" evidence="1">
    <location>
        <begin position="104"/>
        <end position="166"/>
    </location>
</feature>
<feature type="region of interest" description="Disordered" evidence="2">
    <location>
        <begin position="734"/>
        <end position="846"/>
    </location>
</feature>
<feature type="compositionally biased region" description="Acidic residues" evidence="2">
    <location>
        <begin position="756"/>
        <end position="769"/>
    </location>
</feature>
<feature type="compositionally biased region" description="Low complexity" evidence="2">
    <location>
        <begin position="773"/>
        <end position="786"/>
    </location>
</feature>
<feature type="compositionally biased region" description="Acidic residues" evidence="2">
    <location>
        <begin position="797"/>
        <end position="809"/>
    </location>
</feature>
<dbReference type="EMBL" id="EQ962662">
    <property type="protein sequence ID" value="EED11521.1"/>
    <property type="molecule type" value="Genomic_DNA"/>
</dbReference>
<dbReference type="RefSeq" id="XP_002488702.1">
    <property type="nucleotide sequence ID" value="XM_002488657.1"/>
</dbReference>
<dbReference type="GeneID" id="8110154"/>
<dbReference type="VEuPathDB" id="FungiDB:TSTA_008170"/>
<dbReference type="eggNOG" id="KOG1121">
    <property type="taxonomic scope" value="Eukaryota"/>
</dbReference>
<dbReference type="HOGENOM" id="CLU_017134_0_0_1"/>
<dbReference type="InParanoid" id="B8MV65"/>
<dbReference type="OrthoDB" id="2677621at2759"/>
<dbReference type="PhylomeDB" id="B8MV65"/>
<dbReference type="Proteomes" id="UP000001745">
    <property type="component" value="Unassembled WGS sequence"/>
</dbReference>
<dbReference type="GO" id="GO:0005634">
    <property type="term" value="C:nucleus"/>
    <property type="evidence" value="ECO:0007669"/>
    <property type="project" value="UniProtKB-SubCell"/>
</dbReference>
<dbReference type="GO" id="GO:0046983">
    <property type="term" value="F:protein dimerization activity"/>
    <property type="evidence" value="ECO:0007669"/>
    <property type="project" value="InterPro"/>
</dbReference>
<dbReference type="GO" id="GO:0008270">
    <property type="term" value="F:zinc ion binding"/>
    <property type="evidence" value="ECO:0007669"/>
    <property type="project" value="UniProtKB-KW"/>
</dbReference>
<dbReference type="InterPro" id="IPR008906">
    <property type="entry name" value="HATC_C_dom"/>
</dbReference>
<dbReference type="InterPro" id="IPR012337">
    <property type="entry name" value="RNaseH-like_sf"/>
</dbReference>
<dbReference type="InterPro" id="IPR052035">
    <property type="entry name" value="ZnF_BED_domain_contain"/>
</dbReference>
<dbReference type="PANTHER" id="PTHR46481:SF10">
    <property type="entry name" value="ZINC FINGER BED DOMAIN-CONTAINING PROTEIN 39"/>
    <property type="match status" value="1"/>
</dbReference>
<dbReference type="PANTHER" id="PTHR46481">
    <property type="entry name" value="ZINC FINGER BED DOMAIN-CONTAINING PROTEIN 4"/>
    <property type="match status" value="1"/>
</dbReference>
<dbReference type="Pfam" id="PF05699">
    <property type="entry name" value="Dimer_Tnp_hAT"/>
    <property type="match status" value="1"/>
</dbReference>
<dbReference type="SUPFAM" id="SSF53098">
    <property type="entry name" value="Ribonuclease H-like"/>
    <property type="match status" value="1"/>
</dbReference>
<accession>B8MV65</accession>
<proteinExistence type="predicted"/>
<gene>
    <name type="ORF">TSTA_008170</name>
</gene>
<protein>
    <recommendedName>
        <fullName evidence="4">Putative transcriptional regulator tpeD</fullName>
    </recommendedName>
    <alternativeName>
        <fullName evidence="4">Polyesters biosynthesis cluster protein D</fullName>
    </alternativeName>
    <alternativeName>
        <fullName evidence="4">Zinc finger BED domain-containing protein tpeD</fullName>
    </alternativeName>
</protein>
<sequence length="846" mass="97885">MSHSQCTQISDNYPPSLGISDDTSVSLCPSDGLQPFTPDLTYTHQFNFTQPAPLLPPPETLERVGPRNKKIYVLWTEMVNDDFVTWWLSTEYGSQMKRNIFEGKHQSECWQHFHQVAAIQDGSPKVMYKVCNHILSHPADRHRGTSSMNKHYSSGVNCRKSVPVSKDIKRLIQDGMHSAPQKTHYTAKAWMERLVTFITTSRLPFQLVEYPQFRALIEMAQRAPLLPILPCAKTIRNHLQELVQERQKSLLQKLSQGAKLSIALDCWTSPFRQSFMAVTGYFLDVDWNYREILLGFEPLSGSHTGAYLSTVLQQVLEEHQIEARILTVTTDNAANNSTLMNSLSESLQSIELPNQIPVIHIPCMAHIIQLSLNELLGRMEVNPRNDREEIEWTERDKSAQPENQDIIHTLEKIRRLAVFINRSPQRRENFLYLQSKEPKLVPIQDVRTRWNSTFLMLYRARKLQSTFDEYCSEYGQPDLKLTKEEWRQVDYLLSITKPFFTFTTSLSQTKEVTIHSVFAIYNYLFTHLEKSKEKLSEYYAMTDHVGGDLYAIGTILAPQNKLEFFSTSEWEPEWRVRYRKSLEEYIVPYEKRYSETQTQSIPIRQILTGGISDIDMLVTAATSLQPRTTAHDEISRYLGSSTQLMNPRIFWKDHQFKYPILASLAQYILTTPASGSGVERLFNSARDICHYRRGSLKPHTIKELMLFMCTTKFDLESEELSLMDEYLTTQEIQRAREERDAQQALEAQNTKYDFDPISDSEEAESEDESLVLPQSPQASQARSQRSLGKRPAREEEPLIELDGNEEDEVPLPYNRHLVTVSSTQRRSSGRQPKRSKRDEDFVYETP</sequence>
<name>TPED_TALSN</name>
<reference key="1">
    <citation type="journal article" date="2015" name="Genome Announc.">
        <title>Genome sequence of the AIDS-associated pathogen Penicillium marneffei (ATCC18224) and its near taxonomic relative Talaromyces stipitatus (ATCC10500).</title>
        <authorList>
            <person name="Nierman W.C."/>
            <person name="Fedorova-Abrams N.D."/>
            <person name="Andrianopoulos A."/>
        </authorList>
    </citation>
    <scope>NUCLEOTIDE SEQUENCE [LARGE SCALE GENOMIC DNA]</scope>
    <source>
        <strain>ATCC 10500 / CBS 375.48 / QM 6759 / NRRL 1006</strain>
    </source>
</reference>
<reference key="2">
    <citation type="journal article" date="2022" name="Molecules">
        <title>Putative Biosynthesis of Talarodioxadione &amp; Talarooxime from Talaromyces stipitatus.</title>
        <authorList>
            <person name="Al Fahad A.J."/>
        </authorList>
    </citation>
    <scope>FUNCTION</scope>
</reference>
<keyword id="KW-0479">Metal-binding</keyword>
<keyword id="KW-0539">Nucleus</keyword>
<keyword id="KW-1185">Reference proteome</keyword>
<keyword id="KW-0862">Zinc</keyword>
<keyword id="KW-0863">Zinc-finger</keyword>
<organism>
    <name type="scientific">Talaromyces stipitatus (strain ATCC 10500 / CBS 375.48 / QM 6759 / NRRL 1006)</name>
    <name type="common">Penicillium stipitatum</name>
    <dbReference type="NCBI Taxonomy" id="441959"/>
    <lineage>
        <taxon>Eukaryota</taxon>
        <taxon>Fungi</taxon>
        <taxon>Dikarya</taxon>
        <taxon>Ascomycota</taxon>
        <taxon>Pezizomycotina</taxon>
        <taxon>Eurotiomycetes</taxon>
        <taxon>Eurotiomycetidae</taxon>
        <taxon>Eurotiales</taxon>
        <taxon>Trichocomaceae</taxon>
        <taxon>Talaromyces</taxon>
        <taxon>Talaromyces sect. Talaromyces</taxon>
    </lineage>
</organism>